<comment type="function">
    <text>Cytosolic CRABPs may regulate the access of retinoic acid to the nuclear retinoic acid receptors.</text>
</comment>
<comment type="subcellular location">
    <subcellularLocation>
        <location>Cytoplasm</location>
    </subcellularLocation>
</comment>
<comment type="domain">
    <text>Forms a beta-barrel structure that accommodates hydrophobic ligands in its interior.</text>
</comment>
<comment type="similarity">
    <text evidence="3">Belongs to the calycin superfamily. Fatty-acid binding protein (FABP) family.</text>
</comment>
<proteinExistence type="evidence at protein level"/>
<feature type="initiator methionine" description="Removed" evidence="1 2">
    <location>
        <position position="1"/>
    </location>
</feature>
<feature type="chain" id="PRO_0000067405" description="Cellular retinoic acid-binding protein 1">
    <location>
        <begin position="2"/>
        <end position="137"/>
    </location>
</feature>
<feature type="binding site">
    <location>
        <begin position="132"/>
        <end position="134"/>
    </location>
    <ligand>
        <name>all-trans-retinoate</name>
        <dbReference type="ChEBI" id="CHEBI:35291"/>
    </ligand>
</feature>
<feature type="sequence conflict" description="In Ref. 2; AAA30469." evidence="3" ref="2">
    <original>D</original>
    <variation>DD</variation>
    <location>
        <position position="117"/>
    </location>
</feature>
<feature type="strand" evidence="4">
    <location>
        <begin position="6"/>
        <end position="15"/>
    </location>
</feature>
<feature type="helix" evidence="4">
    <location>
        <begin position="16"/>
        <end position="22"/>
    </location>
</feature>
<feature type="helix" evidence="4">
    <location>
        <begin position="27"/>
        <end position="38"/>
    </location>
</feature>
<feature type="strand" evidence="4">
    <location>
        <begin position="41"/>
        <end position="47"/>
    </location>
</feature>
<feature type="strand" evidence="4">
    <location>
        <begin position="50"/>
        <end position="56"/>
    </location>
</feature>
<feature type="strand" evidence="4">
    <location>
        <begin position="61"/>
        <end position="67"/>
    </location>
</feature>
<feature type="strand" evidence="4">
    <location>
        <begin position="72"/>
        <end position="75"/>
    </location>
</feature>
<feature type="strand" evidence="4">
    <location>
        <begin position="81"/>
        <end position="90"/>
    </location>
</feature>
<feature type="strand" evidence="4">
    <location>
        <begin position="93"/>
        <end position="103"/>
    </location>
</feature>
<feature type="strand" evidence="4">
    <location>
        <begin position="108"/>
        <end position="115"/>
    </location>
</feature>
<feature type="strand" evidence="4">
    <location>
        <begin position="118"/>
        <end position="125"/>
    </location>
</feature>
<feature type="strand" evidence="4">
    <location>
        <begin position="128"/>
        <end position="136"/>
    </location>
</feature>
<dbReference type="EMBL" id="X07436">
    <property type="protein sequence ID" value="CAA30317.1"/>
    <property type="molecule type" value="mRNA"/>
</dbReference>
<dbReference type="EMBL" id="M17253">
    <property type="protein sequence ID" value="AAA30469.1"/>
    <property type="molecule type" value="mRNA"/>
</dbReference>
<dbReference type="EMBL" id="M36808">
    <property type="protein sequence ID" value="AAA30470.1"/>
    <property type="molecule type" value="mRNA"/>
</dbReference>
<dbReference type="EMBL" id="AY821681">
    <property type="protein sequence ID" value="AAV84003.1"/>
    <property type="molecule type" value="mRNA"/>
</dbReference>
<dbReference type="EMBL" id="BC112728">
    <property type="protein sequence ID" value="AAI12729.1"/>
    <property type="molecule type" value="mRNA"/>
</dbReference>
<dbReference type="PIR" id="A32704">
    <property type="entry name" value="RJBOA"/>
</dbReference>
<dbReference type="RefSeq" id="NP_851371.1">
    <property type="nucleotide sequence ID" value="NM_181028.2"/>
</dbReference>
<dbReference type="PDB" id="2CBR">
    <property type="method" value="X-ray"/>
    <property type="resolution" value="2.80 A"/>
    <property type="chains" value="A=2-137"/>
</dbReference>
<dbReference type="PDBsum" id="2CBR"/>
<dbReference type="BMRB" id="P62964"/>
<dbReference type="SMR" id="P62964"/>
<dbReference type="FunCoup" id="P62964">
    <property type="interactions" value="77"/>
</dbReference>
<dbReference type="STRING" id="9913.ENSBTAP00000017158"/>
<dbReference type="PaxDb" id="9913-ENSBTAP00000017158"/>
<dbReference type="PeptideAtlas" id="P62964"/>
<dbReference type="Ensembl" id="ENSBTAT00000091586.1">
    <property type="protein sequence ID" value="ENSBTAP00000084905.1"/>
    <property type="gene ID" value="ENSBTAG00000012909.7"/>
</dbReference>
<dbReference type="GeneID" id="282201"/>
<dbReference type="KEGG" id="bta:282201"/>
<dbReference type="CTD" id="1381"/>
<dbReference type="VEuPathDB" id="HostDB:ENSBTAG00000012909"/>
<dbReference type="VGNC" id="VGNC:27685">
    <property type="gene designation" value="CRABP1"/>
</dbReference>
<dbReference type="eggNOG" id="KOG4015">
    <property type="taxonomic scope" value="Eukaryota"/>
</dbReference>
<dbReference type="GeneTree" id="ENSGT00940000159422"/>
<dbReference type="HOGENOM" id="CLU_113772_0_2_1"/>
<dbReference type="InParanoid" id="P62964"/>
<dbReference type="OMA" id="MPNFAGN"/>
<dbReference type="OrthoDB" id="195110at2759"/>
<dbReference type="TreeFam" id="TF316894"/>
<dbReference type="Reactome" id="R-BTA-5365859">
    <property type="pathway name" value="RA biosynthesis pathway"/>
</dbReference>
<dbReference type="EvolutionaryTrace" id="P62964"/>
<dbReference type="Proteomes" id="UP000009136">
    <property type="component" value="Chromosome 21"/>
</dbReference>
<dbReference type="Bgee" id="ENSBTAG00000012909">
    <property type="expression patterns" value="Expressed in retina and 92 other cell types or tissues"/>
</dbReference>
<dbReference type="GO" id="GO:0005829">
    <property type="term" value="C:cytosol"/>
    <property type="evidence" value="ECO:0000318"/>
    <property type="project" value="GO_Central"/>
</dbReference>
<dbReference type="GO" id="GO:0005634">
    <property type="term" value="C:nucleus"/>
    <property type="evidence" value="ECO:0000318"/>
    <property type="project" value="GO_Central"/>
</dbReference>
<dbReference type="GO" id="GO:0032991">
    <property type="term" value="C:protein-containing complex"/>
    <property type="evidence" value="ECO:0000314"/>
    <property type="project" value="CAFA"/>
</dbReference>
<dbReference type="GO" id="GO:0005504">
    <property type="term" value="F:fatty acid binding"/>
    <property type="evidence" value="ECO:0000318"/>
    <property type="project" value="GO_Central"/>
</dbReference>
<dbReference type="GO" id="GO:0042802">
    <property type="term" value="F:identical protein binding"/>
    <property type="evidence" value="ECO:0000314"/>
    <property type="project" value="CAFA"/>
</dbReference>
<dbReference type="GO" id="GO:0016918">
    <property type="term" value="F:retinal binding"/>
    <property type="evidence" value="ECO:0007669"/>
    <property type="project" value="UniProtKB-KW"/>
</dbReference>
<dbReference type="GO" id="GO:0001972">
    <property type="term" value="F:retinoic acid binding"/>
    <property type="evidence" value="ECO:0000314"/>
    <property type="project" value="CAFA"/>
</dbReference>
<dbReference type="GO" id="GO:0019841">
    <property type="term" value="F:retinol binding"/>
    <property type="evidence" value="ECO:0007669"/>
    <property type="project" value="UniProtKB-KW"/>
</dbReference>
<dbReference type="GO" id="GO:0015908">
    <property type="term" value="P:fatty acid transport"/>
    <property type="evidence" value="ECO:0000318"/>
    <property type="project" value="GO_Central"/>
</dbReference>
<dbReference type="CDD" id="cd19460">
    <property type="entry name" value="CRABP1"/>
    <property type="match status" value="1"/>
</dbReference>
<dbReference type="FunFam" id="2.40.128.20:FF:000001">
    <property type="entry name" value="Fatty acid-binding protein, adipocyte"/>
    <property type="match status" value="1"/>
</dbReference>
<dbReference type="Gene3D" id="2.40.128.20">
    <property type="match status" value="1"/>
</dbReference>
<dbReference type="InterPro" id="IPR012674">
    <property type="entry name" value="Calycin"/>
</dbReference>
<dbReference type="InterPro" id="IPR000463">
    <property type="entry name" value="Fatty_acid-bd"/>
</dbReference>
<dbReference type="InterPro" id="IPR031259">
    <property type="entry name" value="ILBP"/>
</dbReference>
<dbReference type="InterPro" id="IPR000566">
    <property type="entry name" value="Lipocln_cytosolic_FA-bd_dom"/>
</dbReference>
<dbReference type="PANTHER" id="PTHR11955">
    <property type="entry name" value="FATTY ACID BINDING PROTEIN"/>
    <property type="match status" value="1"/>
</dbReference>
<dbReference type="Pfam" id="PF00061">
    <property type="entry name" value="Lipocalin"/>
    <property type="match status" value="1"/>
</dbReference>
<dbReference type="PRINTS" id="PR00178">
    <property type="entry name" value="FATTYACIDBP"/>
</dbReference>
<dbReference type="SUPFAM" id="SSF50814">
    <property type="entry name" value="Lipocalins"/>
    <property type="match status" value="1"/>
</dbReference>
<dbReference type="PROSITE" id="PS00214">
    <property type="entry name" value="FABP"/>
    <property type="match status" value="1"/>
</dbReference>
<reference key="1">
    <citation type="journal article" date="1988" name="Eur. J. Biochem.">
        <title>Isolation and characterization of a cDNA clone corresponding to bovine cellular retinoic-acid-binding protein and chromosomal localization of the corresponding human gene.</title>
        <authorList>
            <person name="Nilsson M.H.L."/>
            <person name="Spurr N.K."/>
            <person name="Saksena P."/>
            <person name="Busch C."/>
            <person name="Nordlinder H."/>
            <person name="Peterson P.A."/>
            <person name="Rask L."/>
            <person name="Sundelin J."/>
        </authorList>
    </citation>
    <scope>NUCLEOTIDE SEQUENCE [MRNA]</scope>
    <source>
        <tissue>Adrenal gland</tissue>
    </source>
</reference>
<reference key="2">
    <citation type="journal article" date="1987" name="Proc. Natl. Acad. Sci. U.S.A.">
        <title>Molecular cloning and analysis of functional cDNA and genomic clones encoding bovine cellular retinoic acid-binding protein.</title>
        <authorList>
            <person name="Shubeita H.E."/>
            <person name="Sambrook J.F."/>
            <person name="McCormick A.M."/>
        </authorList>
    </citation>
    <scope>NUCLEOTIDE SEQUENCE [MRNA]</scope>
</reference>
<reference key="3">
    <citation type="journal article" date="1987" name="Mol. Endocrinol.">
        <title>Cellular retinoic acid- and cellular retinol-binding proteins: complementary deoxyribonucleic acid cloning, chromosomal assignment, and tissue specific expression.</title>
        <authorList>
            <person name="Wei L.-N."/>
            <person name="Mertz J.R."/>
            <person name="Goodman D.S."/>
            <person name="Nguyen-Huu M.C."/>
        </authorList>
    </citation>
    <scope>NUCLEOTIDE SEQUENCE [MRNA]</scope>
</reference>
<reference key="4">
    <citation type="submission" date="2004-11" db="EMBL/GenBank/DDBJ databases">
        <title>Bovine cellular retinoic acid binding protein 1.</title>
        <authorList>
            <person name="Jeong Y.-H."/>
            <person name="Lee S.-M."/>
            <person name="Park H.-Y."/>
            <person name="Kim H.-M."/>
            <person name="Yoon D.-H."/>
            <person name="Chung E.-R."/>
            <person name="Kang M.-J."/>
        </authorList>
    </citation>
    <scope>NUCLEOTIDE SEQUENCE [MRNA]</scope>
</reference>
<reference key="5">
    <citation type="submission" date="2006-01" db="EMBL/GenBank/DDBJ databases">
        <authorList>
            <consortium name="NIH - Mammalian Gene Collection (MGC) project"/>
        </authorList>
    </citation>
    <scope>NUCLEOTIDE SEQUENCE [LARGE SCALE MRNA]</scope>
    <source>
        <strain>Hereford</strain>
        <tissue>Kidney</tissue>
    </source>
</reference>
<reference key="6">
    <citation type="journal article" date="1985" name="J. Biol. Chem.">
        <title>The primary structure of bovine cellular retinoic acid-binding protein.</title>
        <authorList>
            <person name="Sundelin J."/>
            <person name="Das S.R."/>
            <person name="Eriksson U."/>
            <person name="Rask L."/>
            <person name="Peterson P.A."/>
        </authorList>
    </citation>
    <scope>PROTEIN SEQUENCE OF 2-137</scope>
    <source>
        <tissue>Adrenal gland</tissue>
    </source>
</reference>
<reference key="7">
    <citation type="journal article" date="1981" name="FEBS Lett.">
        <title>N-terminal sequence homology among retinoid-binding proteins from bovine retina.</title>
        <authorList>
            <person name="Crabb J.W."/>
            <person name="Saari J.C."/>
        </authorList>
    </citation>
    <scope>PROTEIN SEQUENCE OF 2-30</scope>
    <source>
        <tissue>Retina</tissue>
    </source>
</reference>
<reference key="8">
    <citation type="journal article" date="1994" name="Structure">
        <title>Crystal structures of cellular retinoic acid binding proteins I and II in complex with all-trans-retinoic acid and a synthetic retinoid.</title>
        <authorList>
            <person name="Kleywegt G.J."/>
            <person name="Bergfors T."/>
            <person name="Senn H."/>
            <person name="le Motte P."/>
            <person name="Gsell B."/>
            <person name="Shudo K."/>
            <person name="Jones T.A."/>
        </authorList>
    </citation>
    <scope>X-RAY CRYSTALLOGRAPHY (1.8 ANGSTROMS)</scope>
</reference>
<reference key="9">
    <citation type="journal article" date="1999" name="Acta Crystallogr. D">
        <title>Structures of cellular retinoic acid binding proteins I and II in complex with synthetic retinoids.</title>
        <authorList>
            <person name="Chaudhuri B.N."/>
            <person name="Kleywegt G.J."/>
            <person name="Broutin-L'Hermite I."/>
            <person name="Bergfors T."/>
            <person name="Senn H."/>
            <person name="Le Motte P."/>
            <person name="Partouche O."/>
            <person name="Jones T.A."/>
        </authorList>
    </citation>
    <scope>X-RAY CRYSTALLOGRAPHY (2.8 ANGSTROMS)</scope>
</reference>
<protein>
    <recommendedName>
        <fullName>Cellular retinoic acid-binding protein 1</fullName>
    </recommendedName>
    <alternativeName>
        <fullName>Cellular retinoic acid-binding protein I</fullName>
        <shortName>CRABP-I</shortName>
    </alternativeName>
</protein>
<organism>
    <name type="scientific">Bos taurus</name>
    <name type="common">Bovine</name>
    <dbReference type="NCBI Taxonomy" id="9913"/>
    <lineage>
        <taxon>Eukaryota</taxon>
        <taxon>Metazoa</taxon>
        <taxon>Chordata</taxon>
        <taxon>Craniata</taxon>
        <taxon>Vertebrata</taxon>
        <taxon>Euteleostomi</taxon>
        <taxon>Mammalia</taxon>
        <taxon>Eutheria</taxon>
        <taxon>Laurasiatheria</taxon>
        <taxon>Artiodactyla</taxon>
        <taxon>Ruminantia</taxon>
        <taxon>Pecora</taxon>
        <taxon>Bovidae</taxon>
        <taxon>Bovinae</taxon>
        <taxon>Bos</taxon>
    </lineage>
</organism>
<sequence length="137" mass="15592">MPNFAGTWKMRSSENFDELLKALGVNAMLRKVAVAAASKPHVEIRQDGDQFYIKTSTTVRTTEINFKVGEGFEEETVDGRKCRSLPTWENENKIHCTQTLLEGDGPKTYWTRELANDELILTFGADDVVCTRIYVRE</sequence>
<keyword id="KW-0002">3D-structure</keyword>
<keyword id="KW-0963">Cytoplasm</keyword>
<keyword id="KW-0903">Direct protein sequencing</keyword>
<keyword id="KW-1185">Reference proteome</keyword>
<keyword id="KW-0683">Retinol-binding</keyword>
<keyword id="KW-0813">Transport</keyword>
<keyword id="KW-0845">Vitamin A</keyword>
<gene>
    <name type="primary">CRABP1</name>
</gene>
<accession>P62964</accession>
<accession>P02695</accession>
<accession>P02697</accession>
<accession>P15780</accession>
<accession>Q2KI87</accession>
<accession>Q5PXY6</accession>
<evidence type="ECO:0000269" key="1">
    <source>
    </source>
</evidence>
<evidence type="ECO:0000269" key="2">
    <source>
    </source>
</evidence>
<evidence type="ECO:0000305" key="3"/>
<evidence type="ECO:0007829" key="4">
    <source>
        <dbReference type="PDB" id="2CBR"/>
    </source>
</evidence>
<name>RABP1_BOVIN</name>